<gene>
    <name evidence="1" type="primary">rpl32</name>
</gene>
<keyword id="KW-0150">Chloroplast</keyword>
<keyword id="KW-0934">Plastid</keyword>
<keyword id="KW-0687">Ribonucleoprotein</keyword>
<keyword id="KW-0689">Ribosomal protein</keyword>
<sequence>MAVPKKRTSMSKKRIRKNLWKKKTYFSIVQSYSLAKSRSFSSGNEHPKPKGFSGQQANK</sequence>
<protein>
    <recommendedName>
        <fullName evidence="1">Large ribosomal subunit protein bL32c</fullName>
    </recommendedName>
    <alternativeName>
        <fullName evidence="3">50S ribosomal protein L32, chloroplastic</fullName>
    </alternativeName>
</protein>
<reference key="1">
    <citation type="journal article" date="2004" name="DNA Res.">
        <title>Complete nucleotide sequence of the sugarcane (Saccharum officinarum) chloroplast genome: a comparative analysis of four monocot chloroplast genomes.</title>
        <authorList>
            <person name="Asano T."/>
            <person name="Tsudzuki T."/>
            <person name="Takahashi S."/>
            <person name="Shimada H."/>
            <person name="Kadowaki K."/>
        </authorList>
    </citation>
    <scope>NUCLEOTIDE SEQUENCE [LARGE SCALE GENOMIC DNA]</scope>
</reference>
<proteinExistence type="inferred from homology"/>
<name>RK32_SACOF</name>
<geneLocation type="chloroplast"/>
<dbReference type="EMBL" id="AP006714">
    <property type="protein sequence ID" value="BAD27357.1"/>
    <property type="molecule type" value="Genomic_DNA"/>
</dbReference>
<dbReference type="RefSeq" id="YP_009389629.1">
    <property type="nucleotide sequence ID" value="NC_035224.1"/>
</dbReference>
<dbReference type="SMR" id="Q6ENP9"/>
<dbReference type="GeneID" id="33347779"/>
<dbReference type="GO" id="GO:0009507">
    <property type="term" value="C:chloroplast"/>
    <property type="evidence" value="ECO:0007669"/>
    <property type="project" value="UniProtKB-SubCell"/>
</dbReference>
<dbReference type="GO" id="GO:0015934">
    <property type="term" value="C:large ribosomal subunit"/>
    <property type="evidence" value="ECO:0007669"/>
    <property type="project" value="InterPro"/>
</dbReference>
<dbReference type="GO" id="GO:0003735">
    <property type="term" value="F:structural constituent of ribosome"/>
    <property type="evidence" value="ECO:0007669"/>
    <property type="project" value="InterPro"/>
</dbReference>
<dbReference type="GO" id="GO:0006412">
    <property type="term" value="P:translation"/>
    <property type="evidence" value="ECO:0007669"/>
    <property type="project" value="UniProtKB-UniRule"/>
</dbReference>
<dbReference type="HAMAP" id="MF_00340">
    <property type="entry name" value="Ribosomal_bL32"/>
    <property type="match status" value="1"/>
</dbReference>
<dbReference type="InterPro" id="IPR002677">
    <property type="entry name" value="Ribosomal_bL32"/>
</dbReference>
<dbReference type="InterPro" id="IPR044958">
    <property type="entry name" value="Ribosomal_bL32_plant/cyanobact"/>
</dbReference>
<dbReference type="InterPro" id="IPR011332">
    <property type="entry name" value="Ribosomal_zn-bd"/>
</dbReference>
<dbReference type="PANTHER" id="PTHR36083">
    <property type="entry name" value="50S RIBOSOMAL PROTEIN L32, CHLOROPLASTIC"/>
    <property type="match status" value="1"/>
</dbReference>
<dbReference type="PANTHER" id="PTHR36083:SF1">
    <property type="entry name" value="LARGE RIBOSOMAL SUBUNIT PROTEIN BL32C"/>
    <property type="match status" value="1"/>
</dbReference>
<dbReference type="Pfam" id="PF01783">
    <property type="entry name" value="Ribosomal_L32p"/>
    <property type="match status" value="1"/>
</dbReference>
<dbReference type="SUPFAM" id="SSF57829">
    <property type="entry name" value="Zn-binding ribosomal proteins"/>
    <property type="match status" value="1"/>
</dbReference>
<organism>
    <name type="scientific">Saccharum officinarum</name>
    <name type="common">Sugarcane</name>
    <dbReference type="NCBI Taxonomy" id="4547"/>
    <lineage>
        <taxon>Eukaryota</taxon>
        <taxon>Viridiplantae</taxon>
        <taxon>Streptophyta</taxon>
        <taxon>Embryophyta</taxon>
        <taxon>Tracheophyta</taxon>
        <taxon>Spermatophyta</taxon>
        <taxon>Magnoliopsida</taxon>
        <taxon>Liliopsida</taxon>
        <taxon>Poales</taxon>
        <taxon>Poaceae</taxon>
        <taxon>PACMAD clade</taxon>
        <taxon>Panicoideae</taxon>
        <taxon>Andropogonodae</taxon>
        <taxon>Andropogoneae</taxon>
        <taxon>Saccharinae</taxon>
        <taxon>Saccharum</taxon>
        <taxon>Saccharum officinarum species complex</taxon>
    </lineage>
</organism>
<evidence type="ECO:0000255" key="1">
    <source>
        <dbReference type="HAMAP-Rule" id="MF_00340"/>
    </source>
</evidence>
<evidence type="ECO:0000256" key="2">
    <source>
        <dbReference type="SAM" id="MobiDB-lite"/>
    </source>
</evidence>
<evidence type="ECO:0000305" key="3"/>
<feature type="chain" id="PRO_0000172479" description="Large ribosomal subunit protein bL32c">
    <location>
        <begin position="1"/>
        <end position="59"/>
    </location>
</feature>
<feature type="region of interest" description="Disordered" evidence="2">
    <location>
        <begin position="37"/>
        <end position="59"/>
    </location>
</feature>
<comment type="subcellular location">
    <subcellularLocation>
        <location>Plastid</location>
        <location>Chloroplast</location>
    </subcellularLocation>
</comment>
<comment type="similarity">
    <text evidence="1">Belongs to the bacterial ribosomal protein bL32 family.</text>
</comment>
<accession>Q6ENP9</accession>